<sequence length="185" mass="20920">MIQAGDFRKGTTFEMDGDVWQIIDFQHVKPGKGAAFVRTKIRSVMTGSNRDMTFNPNEKYEEARIETREMQYLYNDGTLYYFMDPDSYEQLPIDKASVEEAILYIKENDMATIKFFKGKAFQVSPPNFVELEITQTEPGIKGNTATGATKPATVETGATVNVPLFVNEGDKIKIDTRTGEYLSRV</sequence>
<accession>B0S053</accession>
<gene>
    <name evidence="1" type="primary">efp</name>
    <name type="ordered locus">FMG_0535</name>
</gene>
<dbReference type="EMBL" id="AP008971">
    <property type="protein sequence ID" value="BAG07953.1"/>
    <property type="molecule type" value="Genomic_DNA"/>
</dbReference>
<dbReference type="RefSeq" id="WP_002838657.1">
    <property type="nucleotide sequence ID" value="NC_010376.1"/>
</dbReference>
<dbReference type="SMR" id="B0S053"/>
<dbReference type="STRING" id="334413.FMG_0535"/>
<dbReference type="KEGG" id="fma:FMG_0535"/>
<dbReference type="eggNOG" id="COG0231">
    <property type="taxonomic scope" value="Bacteria"/>
</dbReference>
<dbReference type="HOGENOM" id="CLU_074944_0_1_9"/>
<dbReference type="UniPathway" id="UPA00345"/>
<dbReference type="Proteomes" id="UP000001319">
    <property type="component" value="Chromosome"/>
</dbReference>
<dbReference type="GO" id="GO:0005737">
    <property type="term" value="C:cytoplasm"/>
    <property type="evidence" value="ECO:0007669"/>
    <property type="project" value="UniProtKB-SubCell"/>
</dbReference>
<dbReference type="GO" id="GO:0003746">
    <property type="term" value="F:translation elongation factor activity"/>
    <property type="evidence" value="ECO:0007669"/>
    <property type="project" value="UniProtKB-UniRule"/>
</dbReference>
<dbReference type="GO" id="GO:0043043">
    <property type="term" value="P:peptide biosynthetic process"/>
    <property type="evidence" value="ECO:0007669"/>
    <property type="project" value="InterPro"/>
</dbReference>
<dbReference type="CDD" id="cd04470">
    <property type="entry name" value="S1_EF-P_repeat_1"/>
    <property type="match status" value="1"/>
</dbReference>
<dbReference type="CDD" id="cd05794">
    <property type="entry name" value="S1_EF-P_repeat_2"/>
    <property type="match status" value="1"/>
</dbReference>
<dbReference type="FunFam" id="2.30.30.30:FF:000003">
    <property type="entry name" value="Elongation factor P"/>
    <property type="match status" value="1"/>
</dbReference>
<dbReference type="FunFam" id="2.40.50.140:FF:000004">
    <property type="entry name" value="Elongation factor P"/>
    <property type="match status" value="1"/>
</dbReference>
<dbReference type="FunFam" id="2.40.50.140:FF:000009">
    <property type="entry name" value="Elongation factor P"/>
    <property type="match status" value="1"/>
</dbReference>
<dbReference type="Gene3D" id="2.30.30.30">
    <property type="match status" value="1"/>
</dbReference>
<dbReference type="Gene3D" id="2.40.50.140">
    <property type="entry name" value="Nucleic acid-binding proteins"/>
    <property type="match status" value="2"/>
</dbReference>
<dbReference type="HAMAP" id="MF_00141">
    <property type="entry name" value="EF_P"/>
    <property type="match status" value="1"/>
</dbReference>
<dbReference type="InterPro" id="IPR015365">
    <property type="entry name" value="Elong-fact-P_C"/>
</dbReference>
<dbReference type="InterPro" id="IPR012340">
    <property type="entry name" value="NA-bd_OB-fold"/>
</dbReference>
<dbReference type="InterPro" id="IPR014722">
    <property type="entry name" value="Rib_uL2_dom2"/>
</dbReference>
<dbReference type="InterPro" id="IPR020599">
    <property type="entry name" value="Transl_elong_fac_P/YeiP"/>
</dbReference>
<dbReference type="InterPro" id="IPR013185">
    <property type="entry name" value="Transl_elong_KOW-like"/>
</dbReference>
<dbReference type="InterPro" id="IPR001059">
    <property type="entry name" value="Transl_elong_P/YeiP_cen"/>
</dbReference>
<dbReference type="InterPro" id="IPR013852">
    <property type="entry name" value="Transl_elong_P/YeiP_CS"/>
</dbReference>
<dbReference type="InterPro" id="IPR011768">
    <property type="entry name" value="Transl_elongation_fac_P"/>
</dbReference>
<dbReference type="InterPro" id="IPR008991">
    <property type="entry name" value="Translation_prot_SH3-like_sf"/>
</dbReference>
<dbReference type="NCBIfam" id="TIGR00038">
    <property type="entry name" value="efp"/>
    <property type="match status" value="1"/>
</dbReference>
<dbReference type="NCBIfam" id="NF001810">
    <property type="entry name" value="PRK00529.1"/>
    <property type="match status" value="1"/>
</dbReference>
<dbReference type="PANTHER" id="PTHR30053">
    <property type="entry name" value="ELONGATION FACTOR P"/>
    <property type="match status" value="1"/>
</dbReference>
<dbReference type="PANTHER" id="PTHR30053:SF12">
    <property type="entry name" value="ELONGATION FACTOR P (EF-P) FAMILY PROTEIN"/>
    <property type="match status" value="1"/>
</dbReference>
<dbReference type="Pfam" id="PF01132">
    <property type="entry name" value="EFP"/>
    <property type="match status" value="1"/>
</dbReference>
<dbReference type="Pfam" id="PF08207">
    <property type="entry name" value="EFP_N"/>
    <property type="match status" value="1"/>
</dbReference>
<dbReference type="Pfam" id="PF09285">
    <property type="entry name" value="Elong-fact-P_C"/>
    <property type="match status" value="1"/>
</dbReference>
<dbReference type="PIRSF" id="PIRSF005901">
    <property type="entry name" value="EF-P"/>
    <property type="match status" value="1"/>
</dbReference>
<dbReference type="SMART" id="SM01185">
    <property type="entry name" value="EFP"/>
    <property type="match status" value="1"/>
</dbReference>
<dbReference type="SMART" id="SM00841">
    <property type="entry name" value="Elong-fact-P_C"/>
    <property type="match status" value="1"/>
</dbReference>
<dbReference type="SUPFAM" id="SSF50249">
    <property type="entry name" value="Nucleic acid-binding proteins"/>
    <property type="match status" value="2"/>
</dbReference>
<dbReference type="SUPFAM" id="SSF50104">
    <property type="entry name" value="Translation proteins SH3-like domain"/>
    <property type="match status" value="1"/>
</dbReference>
<dbReference type="PROSITE" id="PS01275">
    <property type="entry name" value="EFP"/>
    <property type="match status" value="1"/>
</dbReference>
<name>EFP_FINM2</name>
<keyword id="KW-0963">Cytoplasm</keyword>
<keyword id="KW-0251">Elongation factor</keyword>
<keyword id="KW-0648">Protein biosynthesis</keyword>
<keyword id="KW-1185">Reference proteome</keyword>
<feature type="chain" id="PRO_1000096156" description="Elongation factor P">
    <location>
        <begin position="1"/>
        <end position="185"/>
    </location>
</feature>
<organism>
    <name type="scientific">Finegoldia magna (strain ATCC 29328 / DSM 20472 / WAL 2508)</name>
    <name type="common">Peptostreptococcus magnus</name>
    <dbReference type="NCBI Taxonomy" id="334413"/>
    <lineage>
        <taxon>Bacteria</taxon>
        <taxon>Bacillati</taxon>
        <taxon>Bacillota</taxon>
        <taxon>Tissierellia</taxon>
        <taxon>Tissierellales</taxon>
        <taxon>Peptoniphilaceae</taxon>
        <taxon>Finegoldia</taxon>
    </lineage>
</organism>
<protein>
    <recommendedName>
        <fullName evidence="1">Elongation factor P</fullName>
        <shortName evidence="1">EF-P</shortName>
    </recommendedName>
</protein>
<comment type="function">
    <text evidence="1">Involved in peptide bond synthesis. Stimulates efficient translation and peptide-bond synthesis on native or reconstituted 70S ribosomes in vitro. Probably functions indirectly by altering the affinity of the ribosome for aminoacyl-tRNA, thus increasing their reactivity as acceptors for peptidyl transferase.</text>
</comment>
<comment type="pathway">
    <text evidence="1">Protein biosynthesis; polypeptide chain elongation.</text>
</comment>
<comment type="subcellular location">
    <subcellularLocation>
        <location evidence="1">Cytoplasm</location>
    </subcellularLocation>
</comment>
<comment type="similarity">
    <text evidence="1">Belongs to the elongation factor P family.</text>
</comment>
<proteinExistence type="inferred from homology"/>
<evidence type="ECO:0000255" key="1">
    <source>
        <dbReference type="HAMAP-Rule" id="MF_00141"/>
    </source>
</evidence>
<reference key="1">
    <citation type="journal article" date="2008" name="DNA Res.">
        <title>Complete genome sequence of Finegoldia magna, an anaerobic opportunistic pathogen.</title>
        <authorList>
            <person name="Goto T."/>
            <person name="Yamashita A."/>
            <person name="Hirakawa H."/>
            <person name="Matsutani M."/>
            <person name="Todo K."/>
            <person name="Ohshima K."/>
            <person name="Toh H."/>
            <person name="Miyamoto K."/>
            <person name="Kuhara S."/>
            <person name="Hattori M."/>
            <person name="Shimizu T."/>
            <person name="Akimoto S."/>
        </authorList>
    </citation>
    <scope>NUCLEOTIDE SEQUENCE [LARGE SCALE GENOMIC DNA]</scope>
    <source>
        <strain>ATCC 29328 / DSM 20472 / WAL 2508</strain>
    </source>
</reference>